<sequence length="713" mass="77955">MGDEDWEAEILKPHVSSYVPVFEKDKYSSGANGDTFNRTSASSSEMEDGPSGRDHFMRSGFSSGRNLGNRDIGESSKRETTSTTGGFGRGKGFGNRGFLNNKFEEGDSSGFWKESTNDCEDTQTRSRGFSKRGGYPDGNDSEASGPFRRGGRDSEYDQDQGSQRGGGLFGSRKPAASDSGSGDTFQSRSGNARGAYKGLNEEVVTGSGKNSWKSEAEGGESSDIQGPKVTYIPPPPPEDEDSIFAHYQTGINFDKYDTILVEVSGHDAPPAILTFEEANLCQTLNNNIAKAGYTKLTPVQKYSIPIVLAGRDLMACAQTGSGKTAAFLLPILAHMMRDGITASRFKELQEPECIIVAPTRELINQIYLEARKFSFGTCVRAVVIYGGTQFGHSIRQIVQGCNILCATPGRLMDIIGKEKIGLKQVKYLVLDEADRMLDMGFGPEMKKLISCPGMPSKEQRQTLLFSATFPEEIQRLAGEFLKSNYLFVAVGQVGGACRDVQQSILQVGPVFKKRKLVEILRNIGDERPMVFVETKKKADFIATFLCQEKISTTSIHGDREQREREQALGDFRCGKCPVLVATSVAARGLDIENVQHVINFNLPSTIDEYVHRIGRTGRCGNTGRAISFFDTESDNHLAQPLVKVLSDAQQDVPAWLEEIAFSSYAPPSFSNSTRGAVFASFDTRKNFQGKNTLNTAGISSAQAPNPVDDESWD</sequence>
<keyword id="KW-0067">ATP-binding</keyword>
<keyword id="KW-0963">Cytoplasm</keyword>
<keyword id="KW-0217">Developmental protein</keyword>
<keyword id="KW-0221">Differentiation</keyword>
<keyword id="KW-0347">Helicase</keyword>
<keyword id="KW-0378">Hydrolase</keyword>
<keyword id="KW-0469">Meiosis</keyword>
<keyword id="KW-0547">Nucleotide-binding</keyword>
<keyword id="KW-0597">Phosphoprotein</keyword>
<keyword id="KW-1185">Reference proteome</keyword>
<keyword id="KW-0677">Repeat</keyword>
<keyword id="KW-0943">RNA-mediated gene silencing</keyword>
<keyword id="KW-0744">Spermatogenesis</keyword>
<name>DDX4_RAT</name>
<proteinExistence type="evidence at protein level"/>
<protein>
    <recommendedName>
        <fullName>Probable ATP-dependent RNA helicase DDX4</fullName>
        <ecNumber evidence="1">3.6.4.13</ecNumber>
    </recommendedName>
    <alternativeName>
        <fullName>DEAD box protein 4</fullName>
    </alternativeName>
    <alternativeName>
        <fullName>Vasa homolog</fullName>
        <shortName>rVLG</shortName>
    </alternativeName>
</protein>
<dbReference type="EC" id="3.6.4.13" evidence="1"/>
<dbReference type="EMBL" id="S75275">
    <property type="protein sequence ID" value="AAB33364.1"/>
    <property type="molecule type" value="mRNA"/>
</dbReference>
<dbReference type="PIR" id="JC2534">
    <property type="entry name" value="JC2534"/>
</dbReference>
<dbReference type="RefSeq" id="NP_001071115.1">
    <property type="nucleotide sequence ID" value="NM_001077647.1"/>
</dbReference>
<dbReference type="SMR" id="Q64060"/>
<dbReference type="FunCoup" id="Q64060">
    <property type="interactions" value="85"/>
</dbReference>
<dbReference type="STRING" id="10116.ENSRNOP00000013035"/>
<dbReference type="iPTMnet" id="Q64060"/>
<dbReference type="PhosphoSitePlus" id="Q64060"/>
<dbReference type="jPOST" id="Q64060"/>
<dbReference type="PaxDb" id="10116-ENSRNOP00000013035"/>
<dbReference type="GeneID" id="310090"/>
<dbReference type="KEGG" id="rno:310090"/>
<dbReference type="AGR" id="RGD:1308793"/>
<dbReference type="CTD" id="54514"/>
<dbReference type="RGD" id="1308793">
    <property type="gene designation" value="Ddx4"/>
</dbReference>
<dbReference type="eggNOG" id="KOG0335">
    <property type="taxonomic scope" value="Eukaryota"/>
</dbReference>
<dbReference type="InParanoid" id="Q64060"/>
<dbReference type="PhylomeDB" id="Q64060"/>
<dbReference type="PRO" id="PR:Q64060"/>
<dbReference type="Proteomes" id="UP000002494">
    <property type="component" value="Unplaced"/>
</dbReference>
<dbReference type="GO" id="GO:0033391">
    <property type="term" value="C:chromatoid body"/>
    <property type="evidence" value="ECO:0000314"/>
    <property type="project" value="RGD"/>
</dbReference>
<dbReference type="GO" id="GO:0005737">
    <property type="term" value="C:cytoplasm"/>
    <property type="evidence" value="ECO:0000250"/>
    <property type="project" value="UniProtKB"/>
</dbReference>
<dbReference type="GO" id="GO:0005634">
    <property type="term" value="C:nucleus"/>
    <property type="evidence" value="ECO:0000266"/>
    <property type="project" value="RGD"/>
</dbReference>
<dbReference type="GO" id="GO:0043186">
    <property type="term" value="C:P granule"/>
    <property type="evidence" value="ECO:0000318"/>
    <property type="project" value="GO_Central"/>
</dbReference>
<dbReference type="GO" id="GO:0048471">
    <property type="term" value="C:perinuclear region of cytoplasm"/>
    <property type="evidence" value="ECO:0000314"/>
    <property type="project" value="RGD"/>
</dbReference>
<dbReference type="GO" id="GO:0071546">
    <property type="term" value="C:pi-body"/>
    <property type="evidence" value="ECO:0000250"/>
    <property type="project" value="UniProtKB"/>
</dbReference>
<dbReference type="GO" id="GO:0071547">
    <property type="term" value="C:piP-body"/>
    <property type="evidence" value="ECO:0000250"/>
    <property type="project" value="UniProtKB"/>
</dbReference>
<dbReference type="GO" id="GO:1990904">
    <property type="term" value="C:ribonucleoprotein complex"/>
    <property type="evidence" value="ECO:0000266"/>
    <property type="project" value="RGD"/>
</dbReference>
<dbReference type="GO" id="GO:0005524">
    <property type="term" value="F:ATP binding"/>
    <property type="evidence" value="ECO:0007669"/>
    <property type="project" value="UniProtKB-KW"/>
</dbReference>
<dbReference type="GO" id="GO:0016887">
    <property type="term" value="F:ATP hydrolysis activity"/>
    <property type="evidence" value="ECO:0000250"/>
    <property type="project" value="UniProtKB"/>
</dbReference>
<dbReference type="GO" id="GO:0140693">
    <property type="term" value="F:molecular condensate scaffold activity"/>
    <property type="evidence" value="ECO:0000266"/>
    <property type="project" value="RGD"/>
</dbReference>
<dbReference type="GO" id="GO:0003729">
    <property type="term" value="F:mRNA binding"/>
    <property type="evidence" value="ECO:0000318"/>
    <property type="project" value="GO_Central"/>
</dbReference>
<dbReference type="GO" id="GO:0003724">
    <property type="term" value="F:RNA helicase activity"/>
    <property type="evidence" value="ECO:0000318"/>
    <property type="project" value="GO_Central"/>
</dbReference>
<dbReference type="GO" id="GO:0030154">
    <property type="term" value="P:cell differentiation"/>
    <property type="evidence" value="ECO:0000318"/>
    <property type="project" value="GO_Central"/>
</dbReference>
<dbReference type="GO" id="GO:0030317">
    <property type="term" value="P:flagellated sperm motility"/>
    <property type="evidence" value="ECO:0000266"/>
    <property type="project" value="RGD"/>
</dbReference>
<dbReference type="GO" id="GO:0007276">
    <property type="term" value="P:gamete generation"/>
    <property type="evidence" value="ECO:0000318"/>
    <property type="project" value="GO_Central"/>
</dbReference>
<dbReference type="GO" id="GO:0007281">
    <property type="term" value="P:germ cell development"/>
    <property type="evidence" value="ECO:0000318"/>
    <property type="project" value="GO_Central"/>
</dbReference>
<dbReference type="GO" id="GO:0007141">
    <property type="term" value="P:male meiosis I"/>
    <property type="evidence" value="ECO:0000250"/>
    <property type="project" value="UniProtKB"/>
</dbReference>
<dbReference type="GO" id="GO:0007140">
    <property type="term" value="P:male meiotic nuclear division"/>
    <property type="evidence" value="ECO:0000250"/>
    <property type="project" value="UniProtKB"/>
</dbReference>
<dbReference type="GO" id="GO:0034587">
    <property type="term" value="P:piRNA processing"/>
    <property type="evidence" value="ECO:0000250"/>
    <property type="project" value="UniProtKB"/>
</dbReference>
<dbReference type="GO" id="GO:0032880">
    <property type="term" value="P:regulation of protein localization"/>
    <property type="evidence" value="ECO:0000266"/>
    <property type="project" value="RGD"/>
</dbReference>
<dbReference type="GO" id="GO:0080021">
    <property type="term" value="P:response to benzoic acid"/>
    <property type="evidence" value="ECO:0000270"/>
    <property type="project" value="RGD"/>
</dbReference>
<dbReference type="GO" id="GO:0032526">
    <property type="term" value="P:response to retinoic acid"/>
    <property type="evidence" value="ECO:0000270"/>
    <property type="project" value="RGD"/>
</dbReference>
<dbReference type="GO" id="GO:0140965">
    <property type="term" value="P:secondary piRNA processing"/>
    <property type="evidence" value="ECO:0000266"/>
    <property type="project" value="RGD"/>
</dbReference>
<dbReference type="GO" id="GO:0007283">
    <property type="term" value="P:spermatogenesis"/>
    <property type="evidence" value="ECO:0000270"/>
    <property type="project" value="RGD"/>
</dbReference>
<dbReference type="GO" id="GO:0141196">
    <property type="term" value="P:transposable element silencing by piRNA-mediated DNA methylation"/>
    <property type="evidence" value="ECO:0000250"/>
    <property type="project" value="UniProtKB"/>
</dbReference>
<dbReference type="GO" id="GO:0141006">
    <property type="term" value="P:transposable element silencing by piRNA-mediated heterochromatin formation"/>
    <property type="evidence" value="ECO:0000250"/>
    <property type="project" value="UniProtKB"/>
</dbReference>
<dbReference type="CDD" id="cd18052">
    <property type="entry name" value="DEADc_DDX4"/>
    <property type="match status" value="1"/>
</dbReference>
<dbReference type="CDD" id="cd18787">
    <property type="entry name" value="SF2_C_DEAD"/>
    <property type="match status" value="1"/>
</dbReference>
<dbReference type="FunFam" id="3.40.50.300:FF:000008">
    <property type="entry name" value="ATP-dependent RNA helicase RhlB"/>
    <property type="match status" value="1"/>
</dbReference>
<dbReference type="FunFam" id="3.40.50.300:FF:000397">
    <property type="entry name" value="Probable ATP-dependent RNA helicase DDX4"/>
    <property type="match status" value="1"/>
</dbReference>
<dbReference type="Gene3D" id="3.40.50.300">
    <property type="entry name" value="P-loop containing nucleotide triphosphate hydrolases"/>
    <property type="match status" value="2"/>
</dbReference>
<dbReference type="InterPro" id="IPR011545">
    <property type="entry name" value="DEAD/DEAH_box_helicase_dom"/>
</dbReference>
<dbReference type="InterPro" id="IPR014001">
    <property type="entry name" value="Helicase_ATP-bd"/>
</dbReference>
<dbReference type="InterPro" id="IPR001650">
    <property type="entry name" value="Helicase_C-like"/>
</dbReference>
<dbReference type="InterPro" id="IPR027417">
    <property type="entry name" value="P-loop_NTPase"/>
</dbReference>
<dbReference type="InterPro" id="IPR000629">
    <property type="entry name" value="RNA-helicase_DEAD-box_CS"/>
</dbReference>
<dbReference type="InterPro" id="IPR014014">
    <property type="entry name" value="RNA_helicase_DEAD_Q_motif"/>
</dbReference>
<dbReference type="PANTHER" id="PTHR47958">
    <property type="entry name" value="ATP-DEPENDENT RNA HELICASE DBP3"/>
    <property type="match status" value="1"/>
</dbReference>
<dbReference type="Pfam" id="PF00270">
    <property type="entry name" value="DEAD"/>
    <property type="match status" value="1"/>
</dbReference>
<dbReference type="Pfam" id="PF00271">
    <property type="entry name" value="Helicase_C"/>
    <property type="match status" value="1"/>
</dbReference>
<dbReference type="SMART" id="SM00487">
    <property type="entry name" value="DEXDc"/>
    <property type="match status" value="1"/>
</dbReference>
<dbReference type="SMART" id="SM00490">
    <property type="entry name" value="HELICc"/>
    <property type="match status" value="1"/>
</dbReference>
<dbReference type="SUPFAM" id="SSF52540">
    <property type="entry name" value="P-loop containing nucleoside triphosphate hydrolases"/>
    <property type="match status" value="2"/>
</dbReference>
<dbReference type="PROSITE" id="PS00039">
    <property type="entry name" value="DEAD_ATP_HELICASE"/>
    <property type="match status" value="1"/>
</dbReference>
<dbReference type="PROSITE" id="PS51192">
    <property type="entry name" value="HELICASE_ATP_BIND_1"/>
    <property type="match status" value="1"/>
</dbReference>
<dbReference type="PROSITE" id="PS51194">
    <property type="entry name" value="HELICASE_CTER"/>
    <property type="match status" value="1"/>
</dbReference>
<dbReference type="PROSITE" id="PS51195">
    <property type="entry name" value="Q_MOTIF"/>
    <property type="match status" value="1"/>
</dbReference>
<evidence type="ECO:0000250" key="1">
    <source>
        <dbReference type="UniProtKB" id="Q61496"/>
    </source>
</evidence>
<evidence type="ECO:0000250" key="2">
    <source>
        <dbReference type="UniProtKB" id="Q9NQI0"/>
    </source>
</evidence>
<evidence type="ECO:0000255" key="3">
    <source>
        <dbReference type="PROSITE-ProRule" id="PRU00541"/>
    </source>
</evidence>
<evidence type="ECO:0000255" key="4">
    <source>
        <dbReference type="PROSITE-ProRule" id="PRU00542"/>
    </source>
</evidence>
<evidence type="ECO:0000256" key="5">
    <source>
        <dbReference type="SAM" id="MobiDB-lite"/>
    </source>
</evidence>
<evidence type="ECO:0000305" key="6"/>
<evidence type="ECO:0007744" key="7">
    <source>
    </source>
</evidence>
<accession>Q64060</accession>
<comment type="function">
    <text evidence="1">ATP-dependent RNA helicase required during spermatogenesis to repress transposable elements and preventing their mobilization, which is essential for the germline integrity. Acts via the piRNA metabolic process, which mediates the repression of transposable elements during meiosis by forming complexes composed of piRNAs and Piwi proteins and governs the methylation and subsequent repression of transposons. Involved in the secondary piRNAs metabolic process, the production of piRNAs in fetal male germ cells through a ping-pong amplification cycle. Required for PIWIL2 slicing-triggered piRNA biogenesis: helicase activity enables utilization of one of the slice cleavage fragments generated by PIWIL2 and processing these pre-piRNAs into piRNAs.</text>
</comment>
<comment type="catalytic activity">
    <reaction evidence="1">
        <text>ATP + H2O = ADP + phosphate + H(+)</text>
        <dbReference type="Rhea" id="RHEA:13065"/>
        <dbReference type="ChEBI" id="CHEBI:15377"/>
        <dbReference type="ChEBI" id="CHEBI:15378"/>
        <dbReference type="ChEBI" id="CHEBI:30616"/>
        <dbReference type="ChEBI" id="CHEBI:43474"/>
        <dbReference type="ChEBI" id="CHEBI:456216"/>
        <dbReference type="EC" id="3.6.4.13"/>
    </reaction>
</comment>
<comment type="subunit">
    <text evidence="1">Found in a mRNP complex, at least composed of TDRD1, TDRD6, TDRD7 and DDX4. Interacts with RANBP9. Interacts with RANBP10. Interacts with PIWIL2 and MAEL. Interacts with BMAL1 and CLOCK. Interacts with Tex19.1 and, probably, Tex19.2. Interacts with RBM46.</text>
</comment>
<comment type="subcellular location">
    <subcellularLocation>
        <location evidence="1">Cytoplasm</location>
    </subcellularLocation>
    <subcellularLocation>
        <location evidence="1">Cytoplasm</location>
        <location evidence="1">Perinuclear region</location>
    </subcellularLocation>
    <text evidence="1">Component of the meiotic nuage, also named P granule, a germ-cell-specific organelle required to repress transposon activity during meiosis.</text>
</comment>
<comment type="tissue specificity">
    <text>Testis.</text>
</comment>
<comment type="similarity">
    <text evidence="6">Belongs to the DEAD box helicase family. DDX4/VASA subfamily.</text>
</comment>
<reference key="1">
    <citation type="journal article" date="1995" name="Biochem. Biophys. Res. Commun.">
        <title>Cloning of a gene of the DEAD box protein family which is specifically expressed in germ cells in rats.</title>
        <authorList>
            <person name="Komiya T."/>
            <person name="Tanigawa Y."/>
        </authorList>
    </citation>
    <scope>NUCLEOTIDE SEQUENCE [MRNA]</scope>
    <source>
        <strain>Wistar</strain>
        <tissue>Testis</tissue>
    </source>
</reference>
<reference key="2">
    <citation type="journal article" date="2012" name="Nat. Commun.">
        <title>Quantitative maps of protein phosphorylation sites across 14 different rat organs and tissues.</title>
        <authorList>
            <person name="Lundby A."/>
            <person name="Secher A."/>
            <person name="Lage K."/>
            <person name="Nordsborg N.B."/>
            <person name="Dmytriyev A."/>
            <person name="Lundby C."/>
            <person name="Olsen J.V."/>
        </authorList>
    </citation>
    <scope>PHOSPHORYLATION [LARGE SCALE ANALYSIS] AT SER-207</scope>
    <scope>IDENTIFICATION BY MASS SPECTROMETRY [LARGE SCALE ANALYSIS]</scope>
</reference>
<gene>
    <name type="primary">Ddx4</name>
</gene>
<feature type="chain" id="PRO_0000054981" description="Probable ATP-dependent RNA helicase DDX4">
    <location>
        <begin position="1"/>
        <end position="713"/>
    </location>
</feature>
<feature type="domain" description="Helicase ATP-binding" evidence="3">
    <location>
        <begin position="304"/>
        <end position="487"/>
    </location>
</feature>
<feature type="domain" description="Helicase C-terminal" evidence="4">
    <location>
        <begin position="515"/>
        <end position="660"/>
    </location>
</feature>
<feature type="region of interest" description="Disordered" evidence="5">
    <location>
        <begin position="23"/>
        <end position="240"/>
    </location>
</feature>
<feature type="region of interest" description="Interaction with RANBP9" evidence="2">
    <location>
        <begin position="213"/>
        <end position="232"/>
    </location>
</feature>
<feature type="region of interest" description="Disordered" evidence="5">
    <location>
        <begin position="689"/>
        <end position="713"/>
    </location>
</feature>
<feature type="short sequence motif" description="Q motif">
    <location>
        <begin position="273"/>
        <end position="301"/>
    </location>
</feature>
<feature type="short sequence motif" description="DEAD box" evidence="1">
    <location>
        <begin position="431"/>
        <end position="434"/>
    </location>
</feature>
<feature type="compositionally biased region" description="Polar residues" evidence="5">
    <location>
        <begin position="29"/>
        <end position="44"/>
    </location>
</feature>
<feature type="compositionally biased region" description="Basic and acidic residues" evidence="5">
    <location>
        <begin position="71"/>
        <end position="80"/>
    </location>
</feature>
<feature type="compositionally biased region" description="Gly residues" evidence="5">
    <location>
        <begin position="85"/>
        <end position="95"/>
    </location>
</feature>
<feature type="compositionally biased region" description="Polar residues" evidence="5">
    <location>
        <begin position="178"/>
        <end position="190"/>
    </location>
</feature>
<feature type="compositionally biased region" description="Polar residues" evidence="5">
    <location>
        <begin position="689"/>
        <end position="703"/>
    </location>
</feature>
<feature type="binding site" evidence="3">
    <location>
        <begin position="317"/>
        <end position="324"/>
    </location>
    <ligand>
        <name>ATP</name>
        <dbReference type="ChEBI" id="CHEBI:30616"/>
    </ligand>
</feature>
<feature type="modified residue" description="Phosphoserine" evidence="7">
    <location>
        <position position="207"/>
    </location>
</feature>
<feature type="modified residue" description="Phosphoserine" evidence="1">
    <location>
        <position position="211"/>
    </location>
</feature>
<feature type="modified residue" description="Phosphoserine" evidence="1">
    <location>
        <position position="711"/>
    </location>
</feature>
<organism>
    <name type="scientific">Rattus norvegicus</name>
    <name type="common">Rat</name>
    <dbReference type="NCBI Taxonomy" id="10116"/>
    <lineage>
        <taxon>Eukaryota</taxon>
        <taxon>Metazoa</taxon>
        <taxon>Chordata</taxon>
        <taxon>Craniata</taxon>
        <taxon>Vertebrata</taxon>
        <taxon>Euteleostomi</taxon>
        <taxon>Mammalia</taxon>
        <taxon>Eutheria</taxon>
        <taxon>Euarchontoglires</taxon>
        <taxon>Glires</taxon>
        <taxon>Rodentia</taxon>
        <taxon>Myomorpha</taxon>
        <taxon>Muroidea</taxon>
        <taxon>Muridae</taxon>
        <taxon>Murinae</taxon>
        <taxon>Rattus</taxon>
    </lineage>
</organism>